<reference evidence="13" key="1">
    <citation type="journal article" date="2009" name="PLoS Biol.">
        <title>Lineage-specific biology revealed by a finished genome assembly of the mouse.</title>
        <authorList>
            <person name="Church D.M."/>
            <person name="Goodstadt L."/>
            <person name="Hillier L.W."/>
            <person name="Zody M.C."/>
            <person name="Goldstein S."/>
            <person name="She X."/>
            <person name="Bult C.J."/>
            <person name="Agarwala R."/>
            <person name="Cherry J.L."/>
            <person name="DiCuccio M."/>
            <person name="Hlavina W."/>
            <person name="Kapustin Y."/>
            <person name="Meric P."/>
            <person name="Maglott D."/>
            <person name="Birtle Z."/>
            <person name="Marques A.C."/>
            <person name="Graves T."/>
            <person name="Zhou S."/>
            <person name="Teague B."/>
            <person name="Potamousis K."/>
            <person name="Churas C."/>
            <person name="Place M."/>
            <person name="Herschleb J."/>
            <person name="Runnheim R."/>
            <person name="Forrest D."/>
            <person name="Amos-Landgraf J."/>
            <person name="Schwartz D.C."/>
            <person name="Cheng Z."/>
            <person name="Lindblad-Toh K."/>
            <person name="Eichler E.E."/>
            <person name="Ponting C.P."/>
        </authorList>
    </citation>
    <scope>NUCLEOTIDE SEQUENCE [LARGE SCALE GENOMIC DNA]</scope>
    <source>
        <strain evidence="13">C57BL/6J</strain>
    </source>
</reference>
<reference evidence="11" key="2">
    <citation type="journal article" date="2017" name="Bio. Protoc.">
        <title>Muscle Histology Characterization Using H&amp;E Staining and Muscle Fiber Type Classification Using Immunofluorescence Staining.</title>
        <authorList>
            <person name="Wang C."/>
            <person name="Yue F."/>
            <person name="Kuang S."/>
        </authorList>
    </citation>
    <scope>SUBCELLULAR LOCATION</scope>
    <scope>TISSUE SPECIFICITY</scope>
</reference>
<name>MYH2_MOUSE</name>
<evidence type="ECO:0000250" key="1">
    <source>
        <dbReference type="UniProtKB" id="P12883"/>
    </source>
</evidence>
<evidence type="ECO:0000250" key="2">
    <source>
        <dbReference type="UniProtKB" id="Q28641"/>
    </source>
</evidence>
<evidence type="ECO:0000250" key="3">
    <source>
        <dbReference type="UniProtKB" id="Q29RW1"/>
    </source>
</evidence>
<evidence type="ECO:0000250" key="4">
    <source>
        <dbReference type="UniProtKB" id="Q9UKX2"/>
    </source>
</evidence>
<evidence type="ECO:0000255" key="5"/>
<evidence type="ECO:0000255" key="6">
    <source>
        <dbReference type="PROSITE-ProRule" id="PRU00116"/>
    </source>
</evidence>
<evidence type="ECO:0000255" key="7">
    <source>
        <dbReference type="PROSITE-ProRule" id="PRU00782"/>
    </source>
</evidence>
<evidence type="ECO:0000255" key="8">
    <source>
        <dbReference type="PROSITE-ProRule" id="PRU01190"/>
    </source>
</evidence>
<evidence type="ECO:0000256" key="9">
    <source>
        <dbReference type="SAM" id="MobiDB-lite"/>
    </source>
</evidence>
<evidence type="ECO:0000269" key="10">
    <source>
    </source>
</evidence>
<evidence type="ECO:0000305" key="11"/>
<evidence type="ECO:0000312" key="12">
    <source>
        <dbReference type="MGI" id="MGI:1339710"/>
    </source>
</evidence>
<evidence type="ECO:0000312" key="13">
    <source>
        <dbReference type="Proteomes" id="UP000000589"/>
    </source>
</evidence>
<proteinExistence type="evidence at protein level"/>
<keyword id="KW-0009">Actin-binding</keyword>
<keyword id="KW-0067">ATP-binding</keyword>
<keyword id="KW-0175">Coiled coil</keyword>
<keyword id="KW-0963">Cytoplasm</keyword>
<keyword id="KW-0488">Methylation</keyword>
<keyword id="KW-0505">Motor protein</keyword>
<keyword id="KW-0514">Muscle protein</keyword>
<keyword id="KW-0518">Myosin</keyword>
<keyword id="KW-0547">Nucleotide-binding</keyword>
<keyword id="KW-0597">Phosphoprotein</keyword>
<keyword id="KW-1185">Reference proteome</keyword>
<keyword id="KW-0787">Thick filament</keyword>
<comment type="function">
    <text evidence="1">Myosins are actin-based motor molecules with ATPase activity essential for muscle contraction.</text>
</comment>
<comment type="subunit">
    <text evidence="4 11">Muscle myosin is a hexameric protein that consists of 2 heavy chain subunits (MHC), 2 alkali light chain subunits (MLC) and 2 regulatory light chain subunits (MLC-2) (Probable). Interacts with GCSAM (By similarity).</text>
</comment>
<comment type="subcellular location">
    <subcellularLocation>
        <location evidence="10">Cytoplasm</location>
        <location evidence="10">Myofibril</location>
    </subcellularLocation>
    <text>Thick filaments of the myofibrils.</text>
</comment>
<comment type="tissue specificity">
    <text evidence="10">Expressed in type 2a myofibers in the tibialis anterior and soleus muscles (at protein level).</text>
</comment>
<comment type="domain">
    <text>The rodlike tail sequence is highly repetitive, showing cycles of a 28-residue repeat pattern composed of 4 heptapeptides, characteristic for alpha-helical coiled coils.</text>
</comment>
<comment type="domain">
    <text evidence="11">Limited proteolysis of myosin heavy chain produces 1 light meromyosin (LMM) and 1 heavy meromyosin (HMM). HMM can be further cleaved into 2 globular subfragments (S1) and 1 rod-shaped subfragment (S2).</text>
</comment>
<comment type="similarity">
    <text evidence="7">Belongs to the TRAFAC class myosin-kinesin ATPase superfamily. Myosin family.</text>
</comment>
<comment type="caution">
    <text evidence="11">Represents a conventional myosin. This protein should not be confused with the unconventional myosin-2 (MYO2) found in fungi.</text>
</comment>
<sequence length="1942" mass="223219">MSSDAEMAVFGEAAPYLRKSEKERIEAQNRPFDAKTSVFVAEPKESFVKGTIQSKDAGKVTVKTEAGATLTVKEDQIFPMNPPKYDKIEDMAMMTHLHEPAVLYNLKERYAAWMIYTYSGLFCVTVNPYKWLPVYNPEVVAAYRGKKRQEAPPHIFSISDNAYQFMLTDRENQSILITGESGAGKTVNTKRVIQYFATIAVTGDKKKEEATSGKMQGTLEDQIISANPLLEAFGNAKTVRNDNSSRFGKFIRIHFGTTGKLASADIETYLLEKSRVTFQLKAERSYHIFYQITSNKKPELIEMLLITTNPYDYPFVSQGEISVASIDDQEELMATDSAIDILGFTNDEKVSIYKLTGAVMHYGNMKFKQKQREEQAEPDGTEVADKAAYLQGLNSADLLKALCYPRVKVGNEYVTKGQTVEQVTNAVGALAKAMYEKMFLWMVTRINQQLDTKQPRQYFIGVLDIAGFEIFDFNSLEQLCINFTNEKLQQFFNHHMFVLEQEEYKKEGIEWTFIDFGMDLAACIELIEKPMGIFSILEEECMFPKATDTSFKNKLYEQHLGKSANFQKPKVVKGKAEAHFSLIHYAGTVDYNITGWLDKNKDPLNETVVGLYQKSSVKTLAYLFSGAQTAEAEASSGGAAKKGAKKKGSSFQTVSALFRENLNKLMTNLRSTHPHFVRCIIPNETKTPGAMEHELVLHQLRCNGVLEGIRICRKGFPSRILYADFKQRYKVLNASAIPEGQYIDSKKASEKLLGSIDIDHTQYKFGHTKVFFKAGLLGLLEEMRDDKLAQLITRTQAMCRGFLARVEYQKMVERRESIFCIQYNIRAFMNVKHWPWMKLFFKIKPLLKSAETEKEMATMKEEFQKTKDDLAKSEAKRKELEEKMVSLLKEKNDLQLQVQAEAEGLADAEERCDQLIKTKIQLEAKIKEVTERAEDEEEINAELTAKKRKLEDECSELKKDIDDLELTLAKVEKEKHATENKVKNLTEEMAGLDETIAKLTKEKKALQEAHQQTLDDLQAEEDKVNTLTKAKIKLEQQVDDLEGSLEQEKKLRMDLERAKRKLEGDLKLAQESIMDIENEKQQLDERLKKKEFEMSNLQSKIEDEQAIGIQLQKKIKELQARIEELEEEIEAERASRAKAEKQRSDLSRELEEISERLEEAGGATSAQIEMNKKREAEFQKMRRDLEEATLQHEATAATLRKKHADSVAELGEQIDNLQRVKQKLEKEKSEMKMEIDDLASNVETVSKAKGNLEKMCRTLEDQVSELKSKEEEQQRLINDLTTQRGRLQTESGEFSRQLDEKEALVSQLSRGKQAFTQQIEELKRQLEEEVKAKNALAHALQSSRHDCDLLREQYEEEQESKAELQRALSKANSEVAQWRTKYETDAIQRTEELEEAKKKLAQRLQAAEEHVEAVNAKCASLEKTKQRLQNEVEDLMLDVERTNAACAALDKKQRNFDKILAEWKQKYEETHAELEASQKEARSLGTELFKMKNAYEESLDQLETLKRENKNLQQEISDLTEQIAEGGKRIHELEKIKKQVEQEKCELQAALEEAEASLEHEEGKILRIQLELNQVKSEIDRKIAEKDEEIDQLKRNHIRVVESMQSTLDAEIRSRNDAIRIKKKMEGDLNEMEIQLNHSNRMAAEALRNYRNTQGILKDTQLHLDDALRGQEDLKEQLAMVERRANLLQAEIEELRATLEQTERSRKIAEQELLDASERVQLLHTQNTSLINTKKKLETDISQIQGEMEDIVQEARNAEEKAKKAITDAAMMAEELKKEQDTSAHLERMKKNMEQTVKDLQLRLDEAEQLALKGGKKQIQKLEARVRELEGEVESEQKRNAEAVKGLRKHERRVKELTYQTEEDRKNILRLQDLVDKLQAKVKSYKRQAEEAEEQSNTNLSKFRKIQHELEEAEERADIAESQVNKLRVKSREVHTKIISEE</sequence>
<gene>
    <name evidence="12" type="primary">Myh2</name>
</gene>
<organism evidence="13">
    <name type="scientific">Mus musculus</name>
    <name type="common">Mouse</name>
    <dbReference type="NCBI Taxonomy" id="10090"/>
    <lineage>
        <taxon>Eukaryota</taxon>
        <taxon>Metazoa</taxon>
        <taxon>Chordata</taxon>
        <taxon>Craniata</taxon>
        <taxon>Vertebrata</taxon>
        <taxon>Euteleostomi</taxon>
        <taxon>Mammalia</taxon>
        <taxon>Eutheria</taxon>
        <taxon>Euarchontoglires</taxon>
        <taxon>Glires</taxon>
        <taxon>Rodentia</taxon>
        <taxon>Myomorpha</taxon>
        <taxon>Muroidea</taxon>
        <taxon>Muridae</taxon>
        <taxon>Murinae</taxon>
        <taxon>Mus</taxon>
        <taxon>Mus</taxon>
    </lineage>
</organism>
<accession>G3UW82</accession>
<protein>
    <recommendedName>
        <fullName evidence="11">Myosin-2</fullName>
    </recommendedName>
    <alternativeName>
        <fullName evidence="4">Myosin heavy chain 2</fullName>
    </alternativeName>
    <alternativeName>
        <fullName>Myosin heavy chain 2a</fullName>
        <shortName evidence="11">MyHC-2a</shortName>
    </alternativeName>
    <alternativeName>
        <fullName evidence="11">Myosin heavy chain IIa</fullName>
        <shortName evidence="12">MyHC-IIa</shortName>
    </alternativeName>
    <alternativeName>
        <fullName>Myosin heavy chain, skeletal muscle, adult 2</fullName>
    </alternativeName>
</protein>
<dbReference type="CCDS" id="CCDS24854.2"/>
<dbReference type="RefSeq" id="NP_001034634.2">
    <property type="nucleotide sequence ID" value="NM_001039545.2"/>
</dbReference>
<dbReference type="SMR" id="G3UW82"/>
<dbReference type="FunCoup" id="G3UW82">
    <property type="interactions" value="225"/>
</dbReference>
<dbReference type="STRING" id="10090.ENSMUSP00000129544"/>
<dbReference type="GlyGen" id="G3UW82">
    <property type="glycosylation" value="2 sites, 2 N-linked glycans (2 sites)"/>
</dbReference>
<dbReference type="iPTMnet" id="G3UW82"/>
<dbReference type="PhosphoSitePlus" id="G3UW82"/>
<dbReference type="jPOST" id="G3UW82"/>
<dbReference type="PaxDb" id="10090-ENSMUSP00000129544"/>
<dbReference type="PeptideAtlas" id="G3UW82"/>
<dbReference type="ProteomicsDB" id="342711"/>
<dbReference type="DNASU" id="17882"/>
<dbReference type="Ensembl" id="ENSMUST00000018641.8">
    <property type="protein sequence ID" value="ENSMUSP00000018641.8"/>
    <property type="gene ID" value="ENSMUSG00000033196.18"/>
</dbReference>
<dbReference type="Ensembl" id="ENSMUST00000170159.8">
    <property type="protein sequence ID" value="ENSMUSP00000129544.2"/>
    <property type="gene ID" value="ENSMUSG00000033196.18"/>
</dbReference>
<dbReference type="GeneID" id="17882"/>
<dbReference type="KEGG" id="mmu:17882"/>
<dbReference type="UCSC" id="uc007jmd.2">
    <property type="organism name" value="mouse"/>
</dbReference>
<dbReference type="AGR" id="MGI:1339710"/>
<dbReference type="CTD" id="4620"/>
<dbReference type="MGI" id="MGI:1339710">
    <property type="gene designation" value="Myh2"/>
</dbReference>
<dbReference type="VEuPathDB" id="HostDB:ENSMUSG00000033196"/>
<dbReference type="eggNOG" id="KOG0161">
    <property type="taxonomic scope" value="Eukaryota"/>
</dbReference>
<dbReference type="GeneTree" id="ENSGT00940000154760"/>
<dbReference type="HOGENOM" id="CLU_000192_8_1_1"/>
<dbReference type="OMA" id="MKAYKRH"/>
<dbReference type="OrthoDB" id="61585at9989"/>
<dbReference type="TreeFam" id="TF314375"/>
<dbReference type="Reactome" id="R-MMU-2029482">
    <property type="pathway name" value="Regulation of actin dynamics for phagocytic cup formation"/>
</dbReference>
<dbReference type="BioGRID-ORCS" id="17882">
    <property type="hits" value="2 hits in 77 CRISPR screens"/>
</dbReference>
<dbReference type="ChiTaRS" id="Myh2">
    <property type="organism name" value="mouse"/>
</dbReference>
<dbReference type="Proteomes" id="UP000000589">
    <property type="component" value="Chromosome 11"/>
</dbReference>
<dbReference type="RNAct" id="G3UW82">
    <property type="molecule type" value="protein"/>
</dbReference>
<dbReference type="Bgee" id="ENSMUSG00000033196">
    <property type="expression patterns" value="Expressed in soleus muscle and 56 other cell types or tissues"/>
</dbReference>
<dbReference type="GO" id="GO:0031672">
    <property type="term" value="C:A band"/>
    <property type="evidence" value="ECO:0000314"/>
    <property type="project" value="MGI"/>
</dbReference>
<dbReference type="GO" id="GO:0005826">
    <property type="term" value="C:actomyosin contractile ring"/>
    <property type="evidence" value="ECO:0000314"/>
    <property type="project" value="MGI"/>
</dbReference>
<dbReference type="GO" id="GO:0005911">
    <property type="term" value="C:cell-cell junction"/>
    <property type="evidence" value="ECO:0000314"/>
    <property type="project" value="MGI"/>
</dbReference>
<dbReference type="GO" id="GO:0005859">
    <property type="term" value="C:muscle myosin complex"/>
    <property type="evidence" value="ECO:0000266"/>
    <property type="project" value="MGI"/>
</dbReference>
<dbReference type="GO" id="GO:0030016">
    <property type="term" value="C:myofibril"/>
    <property type="evidence" value="ECO:0000314"/>
    <property type="project" value="MGI"/>
</dbReference>
<dbReference type="GO" id="GO:0032982">
    <property type="term" value="C:myosin filament"/>
    <property type="evidence" value="ECO:0007669"/>
    <property type="project" value="UniProtKB-KW"/>
</dbReference>
<dbReference type="GO" id="GO:0051015">
    <property type="term" value="F:actin filament binding"/>
    <property type="evidence" value="ECO:0007669"/>
    <property type="project" value="InterPro"/>
</dbReference>
<dbReference type="GO" id="GO:0005524">
    <property type="term" value="F:ATP binding"/>
    <property type="evidence" value="ECO:0007669"/>
    <property type="project" value="UniProtKB-KW"/>
</dbReference>
<dbReference type="GO" id="GO:0003774">
    <property type="term" value="F:cytoskeletal motor activity"/>
    <property type="evidence" value="ECO:0007669"/>
    <property type="project" value="InterPro"/>
</dbReference>
<dbReference type="GO" id="GO:0014850">
    <property type="term" value="P:response to muscle activity"/>
    <property type="evidence" value="ECO:0000314"/>
    <property type="project" value="MGI"/>
</dbReference>
<dbReference type="FunFam" id="1.10.10.820:FF:000001">
    <property type="entry name" value="Myosin heavy chain"/>
    <property type="match status" value="1"/>
</dbReference>
<dbReference type="FunFam" id="1.20.5.340:FF:000002">
    <property type="entry name" value="Myosin heavy chain"/>
    <property type="match status" value="1"/>
</dbReference>
<dbReference type="FunFam" id="1.20.5.340:FF:000003">
    <property type="entry name" value="Myosin heavy chain"/>
    <property type="match status" value="1"/>
</dbReference>
<dbReference type="FunFam" id="1.20.5.340:FF:000004">
    <property type="entry name" value="Myosin heavy chain"/>
    <property type="match status" value="1"/>
</dbReference>
<dbReference type="FunFam" id="1.20.5.340:FF:000006">
    <property type="entry name" value="Myosin heavy chain"/>
    <property type="match status" value="1"/>
</dbReference>
<dbReference type="FunFam" id="1.20.5.340:FF:000013">
    <property type="entry name" value="Myosin heavy chain"/>
    <property type="match status" value="1"/>
</dbReference>
<dbReference type="FunFam" id="1.20.5.370:FF:000001">
    <property type="entry name" value="Myosin heavy chain"/>
    <property type="match status" value="1"/>
</dbReference>
<dbReference type="FunFam" id="1.20.5.370:FF:000002">
    <property type="entry name" value="Myosin heavy chain"/>
    <property type="match status" value="1"/>
</dbReference>
<dbReference type="FunFam" id="1.20.5.370:FF:000003">
    <property type="entry name" value="Myosin heavy chain"/>
    <property type="match status" value="1"/>
</dbReference>
<dbReference type="FunFam" id="1.20.5.370:FF:000007">
    <property type="entry name" value="Myosin heavy chain"/>
    <property type="match status" value="1"/>
</dbReference>
<dbReference type="FunFam" id="1.20.5.370:FF:000008">
    <property type="entry name" value="Myosin heavy chain"/>
    <property type="match status" value="1"/>
</dbReference>
<dbReference type="FunFam" id="1.20.5.4820:FF:000001">
    <property type="entry name" value="Myosin heavy chain"/>
    <property type="match status" value="1"/>
</dbReference>
<dbReference type="FunFam" id="1.20.58.530:FF:000001">
    <property type="entry name" value="Myosin heavy chain"/>
    <property type="match status" value="1"/>
</dbReference>
<dbReference type="FunFam" id="2.30.30.360:FF:000001">
    <property type="entry name" value="Myosin heavy chain"/>
    <property type="match status" value="1"/>
</dbReference>
<dbReference type="FunFam" id="3.40.850.10:FF:000024">
    <property type="entry name" value="Myosin heavy chain, isoform J"/>
    <property type="match status" value="1"/>
</dbReference>
<dbReference type="FunFam" id="1.20.120.720:FF:000001">
    <property type="entry name" value="Myosin heavy chain, muscle"/>
    <property type="match status" value="1"/>
</dbReference>
<dbReference type="Gene3D" id="1.10.10.820">
    <property type="match status" value="1"/>
</dbReference>
<dbReference type="Gene3D" id="1.20.5.340">
    <property type="match status" value="5"/>
</dbReference>
<dbReference type="Gene3D" id="1.20.5.370">
    <property type="match status" value="4"/>
</dbReference>
<dbReference type="Gene3D" id="1.20.5.4820">
    <property type="match status" value="1"/>
</dbReference>
<dbReference type="Gene3D" id="1.20.58.530">
    <property type="match status" value="1"/>
</dbReference>
<dbReference type="Gene3D" id="6.10.250.2420">
    <property type="match status" value="1"/>
</dbReference>
<dbReference type="Gene3D" id="3.40.850.10">
    <property type="entry name" value="Kinesin motor domain"/>
    <property type="match status" value="1"/>
</dbReference>
<dbReference type="Gene3D" id="2.30.30.360">
    <property type="entry name" value="Myosin S1 fragment, N-terminal"/>
    <property type="match status" value="1"/>
</dbReference>
<dbReference type="Gene3D" id="1.20.120.720">
    <property type="entry name" value="Myosin VI head, motor domain, U50 subdomain"/>
    <property type="match status" value="1"/>
</dbReference>
<dbReference type="InterPro" id="IPR000048">
    <property type="entry name" value="IQ_motif_EF-hand-BS"/>
</dbReference>
<dbReference type="InterPro" id="IPR036961">
    <property type="entry name" value="Kinesin_motor_dom_sf"/>
</dbReference>
<dbReference type="InterPro" id="IPR001609">
    <property type="entry name" value="Myosin_head_motor_dom-like"/>
</dbReference>
<dbReference type="InterPro" id="IPR004009">
    <property type="entry name" value="Myosin_N"/>
</dbReference>
<dbReference type="InterPro" id="IPR008989">
    <property type="entry name" value="Myosin_S1_N"/>
</dbReference>
<dbReference type="InterPro" id="IPR002928">
    <property type="entry name" value="Myosin_tail"/>
</dbReference>
<dbReference type="InterPro" id="IPR027417">
    <property type="entry name" value="P-loop_NTPase"/>
</dbReference>
<dbReference type="InterPro" id="IPR014751">
    <property type="entry name" value="XRCC4-like_C"/>
</dbReference>
<dbReference type="PANTHER" id="PTHR45615">
    <property type="entry name" value="MYOSIN HEAVY CHAIN, NON-MUSCLE"/>
    <property type="match status" value="1"/>
</dbReference>
<dbReference type="PANTHER" id="PTHR45615:SF39">
    <property type="entry name" value="MYOSIN-2"/>
    <property type="match status" value="1"/>
</dbReference>
<dbReference type="Pfam" id="PF00063">
    <property type="entry name" value="Myosin_head"/>
    <property type="match status" value="1"/>
</dbReference>
<dbReference type="Pfam" id="PF02736">
    <property type="entry name" value="Myosin_N"/>
    <property type="match status" value="1"/>
</dbReference>
<dbReference type="Pfam" id="PF01576">
    <property type="entry name" value="Myosin_tail_1"/>
    <property type="match status" value="1"/>
</dbReference>
<dbReference type="PRINTS" id="PR00193">
    <property type="entry name" value="MYOSINHEAVY"/>
</dbReference>
<dbReference type="SMART" id="SM00015">
    <property type="entry name" value="IQ"/>
    <property type="match status" value="2"/>
</dbReference>
<dbReference type="SMART" id="SM00242">
    <property type="entry name" value="MYSc"/>
    <property type="match status" value="1"/>
</dbReference>
<dbReference type="SUPFAM" id="SSF90257">
    <property type="entry name" value="Myosin rod fragments"/>
    <property type="match status" value="5"/>
</dbReference>
<dbReference type="SUPFAM" id="SSF52540">
    <property type="entry name" value="P-loop containing nucleoside triphosphate hydrolases"/>
    <property type="match status" value="1"/>
</dbReference>
<dbReference type="SUPFAM" id="SSF57997">
    <property type="entry name" value="Tropomyosin"/>
    <property type="match status" value="1"/>
</dbReference>
<dbReference type="PROSITE" id="PS50096">
    <property type="entry name" value="IQ"/>
    <property type="match status" value="1"/>
</dbReference>
<dbReference type="PROSITE" id="PS51456">
    <property type="entry name" value="MYOSIN_MOTOR"/>
    <property type="match status" value="1"/>
</dbReference>
<dbReference type="PROSITE" id="PS51844">
    <property type="entry name" value="SH3_LIKE"/>
    <property type="match status" value="1"/>
</dbReference>
<feature type="chain" id="PRO_0000460618" description="Myosin-2">
    <location>
        <begin position="1"/>
        <end position="1942"/>
    </location>
</feature>
<feature type="domain" description="Myosin N-terminal SH3-like" evidence="8">
    <location>
        <begin position="33"/>
        <end position="82"/>
    </location>
</feature>
<feature type="domain" description="Myosin motor" evidence="7">
    <location>
        <begin position="86"/>
        <end position="785"/>
    </location>
</feature>
<feature type="domain" description="IQ" evidence="6">
    <location>
        <begin position="788"/>
        <end position="817"/>
    </location>
</feature>
<feature type="region of interest" description="Actin-binding" evidence="7">
    <location>
        <begin position="662"/>
        <end position="684"/>
    </location>
</feature>
<feature type="region of interest" description="Disordered" evidence="9">
    <location>
        <begin position="1130"/>
        <end position="1175"/>
    </location>
</feature>
<feature type="coiled-coil region" evidence="5">
    <location>
        <begin position="849"/>
        <end position="1930"/>
    </location>
</feature>
<feature type="compositionally biased region" description="Basic and acidic residues" evidence="9">
    <location>
        <begin position="1131"/>
        <end position="1159"/>
    </location>
</feature>
<feature type="binding site" evidence="7">
    <location>
        <begin position="179"/>
        <end position="186"/>
    </location>
    <ligand>
        <name>ATP</name>
        <dbReference type="ChEBI" id="CHEBI:30616"/>
    </ligand>
</feature>
<feature type="modified residue" description="Phosphothreonine" evidence="3">
    <location>
        <position position="64"/>
    </location>
</feature>
<feature type="modified residue" description="Phosphothreonine" evidence="3">
    <location>
        <position position="69"/>
    </location>
</feature>
<feature type="modified residue" description="Phosphotyrosine" evidence="3">
    <location>
        <position position="389"/>
    </location>
</feature>
<feature type="modified residue" description="Phosphothreonine" evidence="3">
    <location>
        <position position="419"/>
    </location>
</feature>
<feature type="modified residue" description="Phosphoserine" evidence="3">
    <location>
        <position position="625"/>
    </location>
</feature>
<feature type="modified residue" description="Pros-methylhistidine" evidence="2">
    <location>
        <position position="760"/>
    </location>
</feature>
<feature type="modified residue" description="Phosphoserine" evidence="3">
    <location>
        <position position="1095"/>
    </location>
</feature>
<feature type="modified residue" description="Phosphoserine" evidence="3">
    <location>
        <position position="1099"/>
    </location>
</feature>
<feature type="modified residue" description="Phosphoserine" evidence="3">
    <location>
        <position position="1165"/>
    </location>
</feature>
<feature type="modified residue" description="Phosphoserine" evidence="3">
    <location>
        <position position="1240"/>
    </location>
</feature>
<feature type="modified residue" description="Phosphothreonine" evidence="3">
    <location>
        <position position="1244"/>
    </location>
</feature>
<feature type="modified residue" description="Phosphoserine" evidence="3">
    <location>
        <position position="1246"/>
    </location>
</feature>
<feature type="modified residue" description="Phosphothreonine" evidence="3">
    <location>
        <position position="1258"/>
    </location>
</feature>
<feature type="modified residue" description="Phosphoserine" evidence="3">
    <location>
        <position position="1264"/>
    </location>
</feature>
<feature type="modified residue" description="Phosphothreonine" evidence="3">
    <location>
        <position position="1289"/>
    </location>
</feature>
<feature type="modified residue" description="Phosphoserine" evidence="3">
    <location>
        <position position="1291"/>
    </location>
</feature>
<feature type="modified residue" description="Phosphoserine" evidence="3">
    <location>
        <position position="1295"/>
    </location>
</feature>
<feature type="modified residue" description="Phosphoserine" evidence="3">
    <location>
        <position position="1306"/>
    </location>
</feature>
<feature type="modified residue" description="Phosphoserine" evidence="3">
    <location>
        <position position="1309"/>
    </location>
</feature>
<feature type="modified residue" description="Phosphotyrosine" evidence="3">
    <location>
        <position position="1467"/>
    </location>
</feature>
<feature type="modified residue" description="Phosphothreonine" evidence="3">
    <location>
        <position position="1470"/>
    </location>
</feature>
<feature type="modified residue" description="Phosphoserine" evidence="3">
    <location>
        <position position="1477"/>
    </location>
</feature>
<feature type="modified residue" description="Phosphotyrosine" evidence="3">
    <location>
        <position position="1495"/>
    </location>
</feature>
<feature type="modified residue" description="Phosphoserine" evidence="3">
    <location>
        <position position="1498"/>
    </location>
</feature>
<feature type="modified residue" description="Phosphothreonine" evidence="3">
    <location>
        <position position="1504"/>
    </location>
</feature>
<feature type="modified residue" description="Phosphoserine" evidence="3">
    <location>
        <position position="1517"/>
    </location>
</feature>
<feature type="modified residue" description="Phosphothreonine" evidence="3">
    <location>
        <position position="1520"/>
    </location>
</feature>
<feature type="modified residue" description="Phosphoserine" evidence="3">
    <location>
        <position position="1557"/>
    </location>
</feature>
<feature type="modified residue" description="Phosphoserine" evidence="3">
    <location>
        <position position="1577"/>
    </location>
</feature>
<feature type="modified residue" description="Phosphoserine" evidence="3">
    <location>
        <position position="1603"/>
    </location>
</feature>
<feature type="modified residue" description="Phosphoserine" evidence="3">
    <location>
        <position position="1606"/>
    </location>
</feature>
<feature type="modified residue" description="Phosphoserine" evidence="3">
    <location>
        <position position="1717"/>
    </location>
</feature>
<feature type="modified residue" description="Phosphoserine" evidence="3">
    <location>
        <position position="1729"/>
    </location>
</feature>
<feature type="modified residue" description="Phosphothreonine" evidence="3">
    <location>
        <position position="1733"/>
    </location>
</feature>
<feature type="modified residue" description="Phosphothreonine" evidence="3">
    <location>
        <position position="1739"/>
    </location>
</feature>
<feature type="modified residue" description="Phosphoserine" evidence="3">
    <location>
        <position position="1742"/>
    </location>
</feature>